<dbReference type="EC" id="7.3.2.1" evidence="1"/>
<dbReference type="EMBL" id="CP000023">
    <property type="protein sequence ID" value="AAV60665.1"/>
    <property type="molecule type" value="Genomic_DNA"/>
</dbReference>
<dbReference type="SMR" id="Q5M4F2"/>
<dbReference type="STRING" id="264199.stu1005"/>
<dbReference type="KEGG" id="stl:stu1005"/>
<dbReference type="eggNOG" id="COG1117">
    <property type="taxonomic scope" value="Bacteria"/>
</dbReference>
<dbReference type="HOGENOM" id="CLU_000604_1_22_9"/>
<dbReference type="Proteomes" id="UP000001170">
    <property type="component" value="Chromosome"/>
</dbReference>
<dbReference type="GO" id="GO:0005886">
    <property type="term" value="C:plasma membrane"/>
    <property type="evidence" value="ECO:0007669"/>
    <property type="project" value="UniProtKB-SubCell"/>
</dbReference>
<dbReference type="GO" id="GO:0005524">
    <property type="term" value="F:ATP binding"/>
    <property type="evidence" value="ECO:0007669"/>
    <property type="project" value="UniProtKB-KW"/>
</dbReference>
<dbReference type="GO" id="GO:0016887">
    <property type="term" value="F:ATP hydrolysis activity"/>
    <property type="evidence" value="ECO:0007669"/>
    <property type="project" value="InterPro"/>
</dbReference>
<dbReference type="GO" id="GO:0015415">
    <property type="term" value="F:ATPase-coupled phosphate ion transmembrane transporter activity"/>
    <property type="evidence" value="ECO:0007669"/>
    <property type="project" value="UniProtKB-EC"/>
</dbReference>
<dbReference type="GO" id="GO:0035435">
    <property type="term" value="P:phosphate ion transmembrane transport"/>
    <property type="evidence" value="ECO:0007669"/>
    <property type="project" value="InterPro"/>
</dbReference>
<dbReference type="CDD" id="cd03260">
    <property type="entry name" value="ABC_PstB_phosphate_transporter"/>
    <property type="match status" value="1"/>
</dbReference>
<dbReference type="Gene3D" id="3.40.50.300">
    <property type="entry name" value="P-loop containing nucleotide triphosphate hydrolases"/>
    <property type="match status" value="1"/>
</dbReference>
<dbReference type="InterPro" id="IPR003593">
    <property type="entry name" value="AAA+_ATPase"/>
</dbReference>
<dbReference type="InterPro" id="IPR003439">
    <property type="entry name" value="ABC_transporter-like_ATP-bd"/>
</dbReference>
<dbReference type="InterPro" id="IPR017871">
    <property type="entry name" value="ABC_transporter-like_CS"/>
</dbReference>
<dbReference type="InterPro" id="IPR027417">
    <property type="entry name" value="P-loop_NTPase"/>
</dbReference>
<dbReference type="InterPro" id="IPR005670">
    <property type="entry name" value="PstB-like"/>
</dbReference>
<dbReference type="NCBIfam" id="TIGR00972">
    <property type="entry name" value="3a0107s01c2"/>
    <property type="match status" value="1"/>
</dbReference>
<dbReference type="PANTHER" id="PTHR43423">
    <property type="entry name" value="ABC TRANSPORTER I FAMILY MEMBER 17"/>
    <property type="match status" value="1"/>
</dbReference>
<dbReference type="PANTHER" id="PTHR43423:SF1">
    <property type="entry name" value="ABC TRANSPORTER I FAMILY MEMBER 17"/>
    <property type="match status" value="1"/>
</dbReference>
<dbReference type="Pfam" id="PF00005">
    <property type="entry name" value="ABC_tran"/>
    <property type="match status" value="1"/>
</dbReference>
<dbReference type="SMART" id="SM00382">
    <property type="entry name" value="AAA"/>
    <property type="match status" value="1"/>
</dbReference>
<dbReference type="SUPFAM" id="SSF52540">
    <property type="entry name" value="P-loop containing nucleoside triphosphate hydrolases"/>
    <property type="match status" value="1"/>
</dbReference>
<dbReference type="PROSITE" id="PS00211">
    <property type="entry name" value="ABC_TRANSPORTER_1"/>
    <property type="match status" value="1"/>
</dbReference>
<dbReference type="PROSITE" id="PS50893">
    <property type="entry name" value="ABC_TRANSPORTER_2"/>
    <property type="match status" value="1"/>
</dbReference>
<dbReference type="PROSITE" id="PS51238">
    <property type="entry name" value="PSTB"/>
    <property type="match status" value="1"/>
</dbReference>
<evidence type="ECO:0000255" key="1">
    <source>
        <dbReference type="HAMAP-Rule" id="MF_01702"/>
    </source>
</evidence>
<name>PSTB2_STRT2</name>
<comment type="function">
    <text evidence="1">Part of the ABC transporter complex PstSACB involved in phosphate import. Responsible for energy coupling to the transport system.</text>
</comment>
<comment type="catalytic activity">
    <reaction evidence="1">
        <text>phosphate(out) + ATP + H2O = ADP + 2 phosphate(in) + H(+)</text>
        <dbReference type="Rhea" id="RHEA:24440"/>
        <dbReference type="ChEBI" id="CHEBI:15377"/>
        <dbReference type="ChEBI" id="CHEBI:15378"/>
        <dbReference type="ChEBI" id="CHEBI:30616"/>
        <dbReference type="ChEBI" id="CHEBI:43474"/>
        <dbReference type="ChEBI" id="CHEBI:456216"/>
        <dbReference type="EC" id="7.3.2.1"/>
    </reaction>
</comment>
<comment type="subunit">
    <text evidence="1">The complex is composed of two ATP-binding proteins (PstB), two transmembrane proteins (PstC and PstA) and a solute-binding protein (PstS).</text>
</comment>
<comment type="subcellular location">
    <subcellularLocation>
        <location evidence="1">Cell membrane</location>
        <topology evidence="1">Peripheral membrane protein</topology>
    </subcellularLocation>
</comment>
<comment type="similarity">
    <text evidence="1">Belongs to the ABC transporter superfamily. Phosphate importer (TC 3.A.1.7) family.</text>
</comment>
<organism>
    <name type="scientific">Streptococcus thermophilus (strain ATCC BAA-250 / LMG 18311)</name>
    <dbReference type="NCBI Taxonomy" id="264199"/>
    <lineage>
        <taxon>Bacteria</taxon>
        <taxon>Bacillati</taxon>
        <taxon>Bacillota</taxon>
        <taxon>Bacilli</taxon>
        <taxon>Lactobacillales</taxon>
        <taxon>Streptococcaceae</taxon>
        <taxon>Streptococcus</taxon>
    </lineage>
</organism>
<protein>
    <recommendedName>
        <fullName evidence="1">Phosphate import ATP-binding protein PstB 2</fullName>
        <ecNumber evidence="1">7.3.2.1</ecNumber>
    </recommendedName>
    <alternativeName>
        <fullName evidence="1">ABC phosphate transporter 2</fullName>
    </alternativeName>
    <alternativeName>
        <fullName evidence="1">Phosphate-transporting ATPase 2</fullName>
    </alternativeName>
</protein>
<accession>Q5M4F2</accession>
<reference key="1">
    <citation type="journal article" date="2004" name="Nat. Biotechnol.">
        <title>Complete sequence and comparative genome analysis of the dairy bacterium Streptococcus thermophilus.</title>
        <authorList>
            <person name="Bolotin A."/>
            <person name="Quinquis B."/>
            <person name="Renault P."/>
            <person name="Sorokin A."/>
            <person name="Ehrlich S.D."/>
            <person name="Kulakauskas S."/>
            <person name="Lapidus A."/>
            <person name="Goltsman E."/>
            <person name="Mazur M."/>
            <person name="Pusch G.D."/>
            <person name="Fonstein M."/>
            <person name="Overbeek R."/>
            <person name="Kyprides N."/>
            <person name="Purnelle B."/>
            <person name="Prozzi D."/>
            <person name="Ngui K."/>
            <person name="Masuy D."/>
            <person name="Hancy F."/>
            <person name="Burteau S."/>
            <person name="Boutry M."/>
            <person name="Delcour J."/>
            <person name="Goffeau A."/>
            <person name="Hols P."/>
        </authorList>
    </citation>
    <scope>NUCLEOTIDE SEQUENCE [LARGE SCALE GENOMIC DNA]</scope>
    <source>
        <strain>ATCC BAA-250 / LMG 18311</strain>
    </source>
</reference>
<feature type="chain" id="PRO_0000272552" description="Phosphate import ATP-binding protein PstB 2">
    <location>
        <begin position="1"/>
        <end position="252"/>
    </location>
</feature>
<feature type="domain" description="ABC transporter" evidence="1">
    <location>
        <begin position="6"/>
        <end position="247"/>
    </location>
</feature>
<feature type="binding site" evidence="1">
    <location>
        <begin position="38"/>
        <end position="45"/>
    </location>
    <ligand>
        <name>ATP</name>
        <dbReference type="ChEBI" id="CHEBI:30616"/>
    </ligand>
</feature>
<gene>
    <name evidence="1" type="primary">pstB2</name>
    <name type="ordered locus">stu1005</name>
</gene>
<keyword id="KW-0067">ATP-binding</keyword>
<keyword id="KW-1003">Cell membrane</keyword>
<keyword id="KW-0472">Membrane</keyword>
<keyword id="KW-0547">Nucleotide-binding</keyword>
<keyword id="KW-0592">Phosphate transport</keyword>
<keyword id="KW-1185">Reference proteome</keyword>
<keyword id="KW-1278">Translocase</keyword>
<keyword id="KW-0813">Transport</keyword>
<proteinExistence type="inferred from homology"/>
<sequence>MTEPIISINDLSVYFNKKKAINNVTMDFYPNEITALIGPSGSGKSTLLRSINRMGDLNPECTVTGAVSYNGHNVYSPRTDTVELRKEIGMVFQQPNPFPMSIYENVVYGLRINGIKDKAVLDKAVEESLKGASVWEEVKDRLHDSALGLSGGQQQRVCVARVLATSPKVILLDEPTSALDPISAGKIEETLYNLKDQYTLLLVTRSMQQASRISQRTAFFLDGELIEYSSTKDMFLNPQHKETEDYITGKLG</sequence>